<organism evidence="5">
    <name type="scientific">Roseobacter denitrificans (strain ATCC 33942 / OCh 114)</name>
    <name type="common">Erythrobacter sp. (strain OCh 114)</name>
    <name type="synonym">Roseobacter denitrificans</name>
    <dbReference type="NCBI Taxonomy" id="375451"/>
    <lineage>
        <taxon>Bacteria</taxon>
        <taxon>Pseudomonadati</taxon>
        <taxon>Pseudomonadota</taxon>
        <taxon>Alphaproteobacteria</taxon>
        <taxon>Rhodobacterales</taxon>
        <taxon>Roseobacteraceae</taxon>
        <taxon>Roseobacter</taxon>
    </lineage>
</organism>
<name>DCTP_ROSDO</name>
<sequence>MRLFTKIKGLAAVTCVAALASSAAFAQEMTLKLGHLANEQNAWHLAAVKFGEELSTLTDGRIAVEVFPNESLGKEIDLINGMQLGTVDMTITGESLQNWAPMAALLAVPYAYKSLEHMDEVASGEIGEQIKQQIIEKAQVRPIAFFARGPRNLTSQRPITSPADLDGMKMRVPNVPLFVDVWSALGASPTPMAFSEVFTSLQNGVIDGQENPLALIRSANFNEVQGYVNQTEHVRSWIYLTIAESTWAKLSEDDQNAVMQAAATAQEYERGLLLESLAEDRGYLESKGMTFVEVDGAAFQAAAKDAVLANVSEEIRPIVESLFSE</sequence>
<dbReference type="EMBL" id="CP000362">
    <property type="protein sequence ID" value="ABG30714.1"/>
    <property type="molecule type" value="Genomic_DNA"/>
</dbReference>
<dbReference type="RefSeq" id="WP_011567336.1">
    <property type="nucleotide sequence ID" value="NC_008209.1"/>
</dbReference>
<dbReference type="PDB" id="4PC9">
    <property type="method" value="X-ray"/>
    <property type="resolution" value="1.30 A"/>
    <property type="chains" value="A=27-325"/>
</dbReference>
<dbReference type="PDB" id="4PCD">
    <property type="method" value="X-ray"/>
    <property type="resolution" value="1.70 A"/>
    <property type="chains" value="A=27-325"/>
</dbReference>
<dbReference type="PDBsum" id="4PC9"/>
<dbReference type="PDBsum" id="4PCD"/>
<dbReference type="SMR" id="Q16BC9"/>
<dbReference type="STRING" id="375451.RD1_1052"/>
<dbReference type="KEGG" id="rde:RD1_1052"/>
<dbReference type="eggNOG" id="COG1638">
    <property type="taxonomic scope" value="Bacteria"/>
</dbReference>
<dbReference type="HOGENOM" id="CLU_036176_1_3_5"/>
<dbReference type="OrthoDB" id="8673861at2"/>
<dbReference type="EvolutionaryTrace" id="Q16BC9"/>
<dbReference type="Proteomes" id="UP000007029">
    <property type="component" value="Chromosome"/>
</dbReference>
<dbReference type="GO" id="GO:0030288">
    <property type="term" value="C:outer membrane-bounded periplasmic space"/>
    <property type="evidence" value="ECO:0007669"/>
    <property type="project" value="InterPro"/>
</dbReference>
<dbReference type="GO" id="GO:0055085">
    <property type="term" value="P:transmembrane transport"/>
    <property type="evidence" value="ECO:0007669"/>
    <property type="project" value="InterPro"/>
</dbReference>
<dbReference type="CDD" id="cd13603">
    <property type="entry name" value="PBP2_TRAP_Siap_TeaA_like"/>
    <property type="match status" value="1"/>
</dbReference>
<dbReference type="Gene3D" id="3.40.190.170">
    <property type="entry name" value="Bacterial extracellular solute-binding protein, family 7"/>
    <property type="match status" value="1"/>
</dbReference>
<dbReference type="InterPro" id="IPR018389">
    <property type="entry name" value="DctP_fam"/>
</dbReference>
<dbReference type="InterPro" id="IPR004682">
    <property type="entry name" value="TRAP_DctP"/>
</dbReference>
<dbReference type="InterPro" id="IPR038404">
    <property type="entry name" value="TRAP_DctP_sf"/>
</dbReference>
<dbReference type="NCBIfam" id="TIGR00787">
    <property type="entry name" value="dctP"/>
    <property type="match status" value="1"/>
</dbReference>
<dbReference type="NCBIfam" id="NF037995">
    <property type="entry name" value="TRAP_S1"/>
    <property type="match status" value="1"/>
</dbReference>
<dbReference type="PANTHER" id="PTHR33376">
    <property type="match status" value="1"/>
</dbReference>
<dbReference type="PANTHER" id="PTHR33376:SF4">
    <property type="entry name" value="SIALIC ACID-BINDING PERIPLASMIC PROTEIN SIAP"/>
    <property type="match status" value="1"/>
</dbReference>
<dbReference type="Pfam" id="PF03480">
    <property type="entry name" value="DctP"/>
    <property type="match status" value="1"/>
</dbReference>
<dbReference type="PIRSF" id="PIRSF006470">
    <property type="entry name" value="DctB"/>
    <property type="match status" value="1"/>
</dbReference>
<gene>
    <name evidence="5" type="ordered locus">RD1_1052</name>
</gene>
<keyword id="KW-0002">3D-structure</keyword>
<keyword id="KW-0574">Periplasm</keyword>
<keyword id="KW-1185">Reference proteome</keyword>
<keyword id="KW-0732">Signal</keyword>
<keyword id="KW-0762">Sugar transport</keyword>
<keyword id="KW-0813">Transport</keyword>
<accession>Q16BC9</accession>
<comment type="function">
    <text evidence="3 4">Solute-binding protein that binds L-galactonate and D-mannonate (in vitro) (PubMed:25540822). Probably part of a tripartite ATP-independent periplasmic (TRAP) transport system that mediates solute transport into the cytoplasm.</text>
</comment>
<comment type="subunit">
    <text evidence="1">The complex is comprised of an extracytoplasmic solute-binding protein and a heteromeric permease formed by two transmembrane proteins.</text>
</comment>
<comment type="subcellular location">
    <subcellularLocation>
        <location evidence="1">Periplasm</location>
    </subcellularLocation>
</comment>
<comment type="similarity">
    <text evidence="4">Belongs to the bacterial solute-binding protein 7 family.</text>
</comment>
<evidence type="ECO:0000250" key="1">
    <source>
        <dbReference type="UniProtKB" id="P37735"/>
    </source>
</evidence>
<evidence type="ECO:0000255" key="2"/>
<evidence type="ECO:0000269" key="3">
    <source>
    </source>
</evidence>
<evidence type="ECO:0000305" key="4"/>
<evidence type="ECO:0000312" key="5">
    <source>
        <dbReference type="EMBL" id="ABG30714.1"/>
    </source>
</evidence>
<evidence type="ECO:0007744" key="6">
    <source>
        <dbReference type="PDB" id="4PC9"/>
    </source>
</evidence>
<evidence type="ECO:0007744" key="7">
    <source>
        <dbReference type="PDB" id="4PCD"/>
    </source>
</evidence>
<evidence type="ECO:0007829" key="8">
    <source>
        <dbReference type="PDB" id="4PC9"/>
    </source>
</evidence>
<evidence type="ECO:0007829" key="9">
    <source>
        <dbReference type="PDB" id="4PCD"/>
    </source>
</evidence>
<feature type="signal peptide" evidence="2">
    <location>
        <begin position="1"/>
        <end position="26"/>
    </location>
</feature>
<feature type="chain" id="PRO_5004184503" description="Solute-binding protein RD1_1052" evidence="2">
    <location>
        <begin position="27"/>
        <end position="325"/>
    </location>
</feature>
<feature type="binding site" evidence="3 6">
    <location>
        <position position="75"/>
    </location>
    <ligand>
        <name>D-mannonate</name>
        <dbReference type="ChEBI" id="CHEBI:17767"/>
    </ligand>
</feature>
<feature type="binding site" evidence="3 7">
    <location>
        <position position="75"/>
    </location>
    <ligand>
        <name>L-galactonate</name>
        <dbReference type="ChEBI" id="CHEBI:53071"/>
    </ligand>
</feature>
<feature type="binding site" evidence="3 6">
    <location>
        <begin position="93"/>
        <end position="95"/>
    </location>
    <ligand>
        <name>D-mannonate</name>
        <dbReference type="ChEBI" id="CHEBI:17767"/>
    </ligand>
</feature>
<feature type="binding site" evidence="3 7">
    <location>
        <begin position="93"/>
        <end position="95"/>
    </location>
    <ligand>
        <name>L-galactonate</name>
        <dbReference type="ChEBI" id="CHEBI:53071"/>
    </ligand>
</feature>
<feature type="binding site" evidence="3 6">
    <location>
        <begin position="148"/>
        <end position="151"/>
    </location>
    <ligand>
        <name>D-mannonate</name>
        <dbReference type="ChEBI" id="CHEBI:17767"/>
    </ligand>
</feature>
<feature type="binding site" evidence="3 7">
    <location>
        <begin position="148"/>
        <end position="151"/>
    </location>
    <ligand>
        <name>L-galactonate</name>
        <dbReference type="ChEBI" id="CHEBI:53071"/>
    </ligand>
</feature>
<feature type="binding site" evidence="3 6">
    <location>
        <position position="171"/>
    </location>
    <ligand>
        <name>D-mannonate</name>
        <dbReference type="ChEBI" id="CHEBI:17767"/>
    </ligand>
</feature>
<feature type="binding site" evidence="3 7">
    <location>
        <position position="171"/>
    </location>
    <ligand>
        <name>L-galactonate</name>
        <dbReference type="ChEBI" id="CHEBI:53071"/>
    </ligand>
</feature>
<feature type="binding site" evidence="3 6">
    <location>
        <position position="211"/>
    </location>
    <ligand>
        <name>D-mannonate</name>
        <dbReference type="ChEBI" id="CHEBI:17767"/>
    </ligand>
</feature>
<feature type="binding site" evidence="3 7">
    <location>
        <position position="211"/>
    </location>
    <ligand>
        <name>L-galactonate</name>
        <dbReference type="ChEBI" id="CHEBI:53071"/>
    </ligand>
</feature>
<feature type="strand" evidence="8">
    <location>
        <begin position="29"/>
        <end position="34"/>
    </location>
</feature>
<feature type="helix" evidence="8">
    <location>
        <begin position="42"/>
        <end position="57"/>
    </location>
</feature>
<feature type="turn" evidence="8">
    <location>
        <begin position="58"/>
        <end position="60"/>
    </location>
</feature>
<feature type="strand" evidence="8">
    <location>
        <begin position="61"/>
        <end position="67"/>
    </location>
</feature>
<feature type="helix" evidence="8">
    <location>
        <begin position="75"/>
        <end position="84"/>
    </location>
</feature>
<feature type="strand" evidence="8">
    <location>
        <begin position="89"/>
        <end position="92"/>
    </location>
</feature>
<feature type="helix" evidence="8">
    <location>
        <begin position="94"/>
        <end position="98"/>
    </location>
</feature>
<feature type="helix" evidence="8">
    <location>
        <begin position="101"/>
        <end position="107"/>
    </location>
</feature>
<feature type="turn" evidence="9">
    <location>
        <begin position="109"/>
        <end position="111"/>
    </location>
</feature>
<feature type="helix" evidence="8">
    <location>
        <begin position="115"/>
        <end position="123"/>
    </location>
</feature>
<feature type="helix" evidence="8">
    <location>
        <begin position="125"/>
        <end position="138"/>
    </location>
</feature>
<feature type="strand" evidence="8">
    <location>
        <begin position="140"/>
        <end position="147"/>
    </location>
</feature>
<feature type="strand" evidence="8">
    <location>
        <begin position="151"/>
        <end position="157"/>
    </location>
</feature>
<feature type="helix" evidence="8">
    <location>
        <begin position="162"/>
        <end position="164"/>
    </location>
</feature>
<feature type="strand" evidence="8">
    <location>
        <begin position="169"/>
        <end position="172"/>
    </location>
</feature>
<feature type="helix" evidence="8">
    <location>
        <begin position="176"/>
        <end position="185"/>
    </location>
</feature>
<feature type="strand" evidence="8">
    <location>
        <begin position="188"/>
        <end position="191"/>
    </location>
</feature>
<feature type="helix" evidence="8">
    <location>
        <begin position="194"/>
        <end position="196"/>
    </location>
</feature>
<feature type="helix" evidence="8">
    <location>
        <begin position="197"/>
        <end position="202"/>
    </location>
</feature>
<feature type="strand" evidence="8">
    <location>
        <begin position="207"/>
        <end position="212"/>
    </location>
</feature>
<feature type="helix" evidence="8">
    <location>
        <begin position="213"/>
        <end position="218"/>
    </location>
</feature>
<feature type="helix" evidence="8">
    <location>
        <begin position="221"/>
        <end position="223"/>
    </location>
</feature>
<feature type="strand" evidence="8">
    <location>
        <begin position="227"/>
        <end position="234"/>
    </location>
</feature>
<feature type="strand" evidence="8">
    <location>
        <begin position="237"/>
        <end position="243"/>
    </location>
</feature>
<feature type="helix" evidence="8">
    <location>
        <begin position="244"/>
        <end position="247"/>
    </location>
</feature>
<feature type="helix" evidence="8">
    <location>
        <begin position="252"/>
        <end position="286"/>
    </location>
</feature>
<feature type="strand" evidence="8">
    <location>
        <begin position="290"/>
        <end position="292"/>
    </location>
</feature>
<feature type="helix" evidence="8">
    <location>
        <begin position="296"/>
        <end position="310"/>
    </location>
</feature>
<feature type="turn" evidence="8">
    <location>
        <begin position="313"/>
        <end position="315"/>
    </location>
</feature>
<feature type="helix" evidence="8">
    <location>
        <begin position="316"/>
        <end position="323"/>
    </location>
</feature>
<protein>
    <recommendedName>
        <fullName evidence="4">Solute-binding protein RD1_1052</fullName>
    </recommendedName>
</protein>
<reference key="1">
    <citation type="journal article" date="2007" name="J. Bacteriol.">
        <title>The complete genome sequence of Roseobacter denitrificans reveals a mixotrophic rather than photosynthetic metabolism.</title>
        <authorList>
            <person name="Swingley W.D."/>
            <person name="Sadekar S."/>
            <person name="Mastrian S.D."/>
            <person name="Matthies H.J."/>
            <person name="Hao J."/>
            <person name="Ramos H."/>
            <person name="Acharya C.R."/>
            <person name="Conrad A.L."/>
            <person name="Taylor H.L."/>
            <person name="Dejesa L.C."/>
            <person name="Shah M.K."/>
            <person name="O'Huallachain M.E."/>
            <person name="Lince M.T."/>
            <person name="Blankenship R.E."/>
            <person name="Beatty J.T."/>
            <person name="Touchman J.W."/>
        </authorList>
    </citation>
    <scope>NUCLEOTIDE SEQUENCE [LARGE SCALE GENOMIC DNA]</scope>
    <source>
        <strain>ATCC 33942 / OCh 114</strain>
    </source>
</reference>
<reference evidence="6 7" key="2">
    <citation type="journal article" date="2015" name="Biochemistry">
        <title>Experimental strategies for functional annotation and metabolism discovery: targeted screening of solute binding proteins and unbiased panning of metabolomes.</title>
        <authorList>
            <person name="Vetting M.W."/>
            <person name="Al-Obaidi N."/>
            <person name="Zhao S."/>
            <person name="San Francisco B."/>
            <person name="Kim J."/>
            <person name="Wichelecki D.J."/>
            <person name="Bouvier J.T."/>
            <person name="Solbiati J.O."/>
            <person name="Vu H."/>
            <person name="Zhang X."/>
            <person name="Rodionov D.A."/>
            <person name="Love J.D."/>
            <person name="Hillerich B.S."/>
            <person name="Seidel R.D."/>
            <person name="Quinn R.J."/>
            <person name="Osterman A.L."/>
            <person name="Cronan J.E."/>
            <person name="Jacobson M.P."/>
            <person name="Gerlt J.A."/>
            <person name="Almo S.C."/>
        </authorList>
    </citation>
    <scope>X-RAY CRYSTALLOGRAPHY (1.30 ANGSTROMS) OF 27-325 IN COMPLEXES WITH L-GALACTONATE AND D-MANNONATE</scope>
    <scope>FUNCTION</scope>
</reference>
<proteinExistence type="evidence at protein level"/>